<name>UB2D1_RAT</name>
<proteinExistence type="evidence at protein level"/>
<gene>
    <name type="primary">Ube2d1</name>
</gene>
<dbReference type="EC" id="2.3.2.23"/>
<dbReference type="EC" id="2.3.2.24"/>
<dbReference type="EMBL" id="CH473988">
    <property type="protein sequence ID" value="EDL97256.1"/>
    <property type="molecule type" value="Genomic_DNA"/>
</dbReference>
<dbReference type="RefSeq" id="NP_001102000.1">
    <property type="nucleotide sequence ID" value="NM_001108530.1"/>
</dbReference>
<dbReference type="BMRB" id="D3ZDK2"/>
<dbReference type="SMR" id="D3ZDK2"/>
<dbReference type="BioGRID" id="262993">
    <property type="interactions" value="1"/>
</dbReference>
<dbReference type="FunCoup" id="D3ZDK2">
    <property type="interactions" value="1219"/>
</dbReference>
<dbReference type="STRING" id="10116.ENSRNOP00000000750"/>
<dbReference type="PhosphoSitePlus" id="D3ZDK2"/>
<dbReference type="PaxDb" id="10116-ENSRNOP00000000750"/>
<dbReference type="PeptideAtlas" id="D3ZDK2"/>
<dbReference type="Ensembl" id="ENSRNOT00000000750.8">
    <property type="protein sequence ID" value="ENSRNOP00000000750.7"/>
    <property type="gene ID" value="ENSRNOG00000000611.8"/>
</dbReference>
<dbReference type="GeneID" id="361831"/>
<dbReference type="KEGG" id="rno:361831"/>
<dbReference type="UCSC" id="RGD:1307886">
    <property type="organism name" value="rat"/>
</dbReference>
<dbReference type="AGR" id="RGD:1307886"/>
<dbReference type="CTD" id="7321"/>
<dbReference type="RGD" id="1307886">
    <property type="gene designation" value="Ube2d1"/>
</dbReference>
<dbReference type="eggNOG" id="KOG0417">
    <property type="taxonomic scope" value="Eukaryota"/>
</dbReference>
<dbReference type="GeneTree" id="ENSGT00940000155109"/>
<dbReference type="HOGENOM" id="CLU_030988_13_3_1"/>
<dbReference type="InParanoid" id="D3ZDK2"/>
<dbReference type="PhylomeDB" id="D3ZDK2"/>
<dbReference type="TreeFam" id="TF101108"/>
<dbReference type="Reactome" id="R-RNO-1234176">
    <property type="pathway name" value="Oxygen-dependent proline hydroxylation of Hypoxia-inducible Factor Alpha"/>
</dbReference>
<dbReference type="Reactome" id="R-RNO-141430">
    <property type="pathway name" value="Inactivation of APC/C via direct inhibition of the APC/C complex"/>
</dbReference>
<dbReference type="Reactome" id="R-RNO-174048">
    <property type="pathway name" value="APC/C:Cdc20 mediated degradation of Cyclin B"/>
</dbReference>
<dbReference type="Reactome" id="R-RNO-174084">
    <property type="pathway name" value="Autodegradation of Cdh1 by Cdh1:APC/C"/>
</dbReference>
<dbReference type="Reactome" id="R-RNO-174154">
    <property type="pathway name" value="APC/C:Cdc20 mediated degradation of Securin"/>
</dbReference>
<dbReference type="Reactome" id="R-RNO-174178">
    <property type="pathway name" value="APC/C:Cdh1 mediated degradation of Cdc20 and other APC/C:Cdh1 targeted proteins in late mitosis/early G1"/>
</dbReference>
<dbReference type="Reactome" id="R-RNO-174184">
    <property type="pathway name" value="Cdc20:Phospho-APC/C mediated degradation of Cyclin A"/>
</dbReference>
<dbReference type="Reactome" id="R-RNO-176407">
    <property type="pathway name" value="Conversion from APC/C:Cdc20 to APC/C:Cdh1 in late anaphase"/>
</dbReference>
<dbReference type="Reactome" id="R-RNO-176408">
    <property type="pathway name" value="Regulation of APC/C activators between G1/S and early anaphase"/>
</dbReference>
<dbReference type="Reactome" id="R-RNO-176412">
    <property type="pathway name" value="Phosphorylation of the APC/C"/>
</dbReference>
<dbReference type="Reactome" id="R-RNO-179409">
    <property type="pathway name" value="APC-Cdc20 mediated degradation of Nek2A"/>
</dbReference>
<dbReference type="Reactome" id="R-RNO-201451">
    <property type="pathway name" value="Signaling by BMP"/>
</dbReference>
<dbReference type="Reactome" id="R-RNO-2173795">
    <property type="pathway name" value="Downregulation of SMAD2/3:SMAD4 transcriptional activity"/>
</dbReference>
<dbReference type="Reactome" id="R-RNO-2467813">
    <property type="pathway name" value="Separation of Sister Chromatids"/>
</dbReference>
<dbReference type="Reactome" id="R-RNO-2559582">
    <property type="pathway name" value="Senescence-Associated Secretory Phenotype (SASP)"/>
</dbReference>
<dbReference type="Reactome" id="R-RNO-5357905">
    <property type="pathway name" value="Regulation of TNFR1 signaling"/>
</dbReference>
<dbReference type="Reactome" id="R-RNO-5689896">
    <property type="pathway name" value="Ovarian tumor domain proteases"/>
</dbReference>
<dbReference type="Reactome" id="R-RNO-68867">
    <property type="pathway name" value="Assembly of the pre-replicative complex"/>
</dbReference>
<dbReference type="Reactome" id="R-RNO-69017">
    <property type="pathway name" value="CDK-mediated phosphorylation and removal of Cdc6"/>
</dbReference>
<dbReference type="Reactome" id="R-RNO-8866652">
    <property type="pathway name" value="Synthesis of active ubiquitin: roles of E1 and E2 enzymes"/>
</dbReference>
<dbReference type="Reactome" id="R-RNO-8866654">
    <property type="pathway name" value="E3 ubiquitin ligases ubiquitinate target proteins"/>
</dbReference>
<dbReference type="Reactome" id="R-RNO-8951664">
    <property type="pathway name" value="Neddylation"/>
</dbReference>
<dbReference type="Reactome" id="R-RNO-9033241">
    <property type="pathway name" value="Peroxisomal protein import"/>
</dbReference>
<dbReference type="Reactome" id="R-RNO-937041">
    <property type="pathway name" value="IKK complex recruitment mediated by RIP1"/>
</dbReference>
<dbReference type="Reactome" id="R-RNO-9705462">
    <property type="pathway name" value="Inactivation of CSF3 (G-CSF) signaling"/>
</dbReference>
<dbReference type="Reactome" id="R-RNO-983168">
    <property type="pathway name" value="Antigen processing: Ubiquitination &amp; Proteasome degradation"/>
</dbReference>
<dbReference type="UniPathway" id="UPA00143"/>
<dbReference type="PRO" id="PR:D3ZDK2"/>
<dbReference type="Proteomes" id="UP000002494">
    <property type="component" value="Chromosome 20"/>
</dbReference>
<dbReference type="Proteomes" id="UP000234681">
    <property type="component" value="Chromosome 20"/>
</dbReference>
<dbReference type="Bgee" id="ENSRNOG00000000611">
    <property type="expression patterns" value="Expressed in quadriceps femoris and 20 other cell types or tissues"/>
</dbReference>
<dbReference type="GO" id="GO:0005737">
    <property type="term" value="C:cytoplasm"/>
    <property type="evidence" value="ECO:0000250"/>
    <property type="project" value="UniProtKB"/>
</dbReference>
<dbReference type="GO" id="GO:0005634">
    <property type="term" value="C:nucleus"/>
    <property type="evidence" value="ECO:0000318"/>
    <property type="project" value="GO_Central"/>
</dbReference>
<dbReference type="GO" id="GO:0032991">
    <property type="term" value="C:protein-containing complex"/>
    <property type="evidence" value="ECO:0000266"/>
    <property type="project" value="RGD"/>
</dbReference>
<dbReference type="GO" id="GO:0005524">
    <property type="term" value="F:ATP binding"/>
    <property type="evidence" value="ECO:0007669"/>
    <property type="project" value="UniProtKB-KW"/>
</dbReference>
<dbReference type="GO" id="GO:0061631">
    <property type="term" value="F:ubiquitin conjugating enzyme activity"/>
    <property type="evidence" value="ECO:0000266"/>
    <property type="project" value="RGD"/>
</dbReference>
<dbReference type="GO" id="GO:0061630">
    <property type="term" value="F:ubiquitin protein ligase activity"/>
    <property type="evidence" value="ECO:0000266"/>
    <property type="project" value="RGD"/>
</dbReference>
<dbReference type="GO" id="GO:0004842">
    <property type="term" value="F:ubiquitin-protein transferase activity"/>
    <property type="evidence" value="ECO:0000314"/>
    <property type="project" value="UniProtKB"/>
</dbReference>
<dbReference type="GO" id="GO:1904262">
    <property type="term" value="P:negative regulation of TORC1 signaling"/>
    <property type="evidence" value="ECO:0000266"/>
    <property type="project" value="RGD"/>
</dbReference>
<dbReference type="GO" id="GO:1902916">
    <property type="term" value="P:positive regulation of protein polyubiquitination"/>
    <property type="evidence" value="ECO:0000266"/>
    <property type="project" value="RGD"/>
</dbReference>
<dbReference type="GO" id="GO:0031398">
    <property type="term" value="P:positive regulation of protein ubiquitination"/>
    <property type="evidence" value="ECO:0000266"/>
    <property type="project" value="RGD"/>
</dbReference>
<dbReference type="GO" id="GO:0043161">
    <property type="term" value="P:proteasome-mediated ubiquitin-dependent protein catabolic process"/>
    <property type="evidence" value="ECO:0000266"/>
    <property type="project" value="RGD"/>
</dbReference>
<dbReference type="GO" id="GO:0070936">
    <property type="term" value="P:protein K48-linked ubiquitination"/>
    <property type="evidence" value="ECO:0000250"/>
    <property type="project" value="UniProtKB"/>
</dbReference>
<dbReference type="GO" id="GO:0000209">
    <property type="term" value="P:protein polyubiquitination"/>
    <property type="evidence" value="ECO:0000266"/>
    <property type="project" value="RGD"/>
</dbReference>
<dbReference type="GO" id="GO:0006511">
    <property type="term" value="P:ubiquitin-dependent protein catabolic process"/>
    <property type="evidence" value="ECO:0000266"/>
    <property type="project" value="RGD"/>
</dbReference>
<dbReference type="CDD" id="cd23792">
    <property type="entry name" value="UBCc_UBE2D"/>
    <property type="match status" value="1"/>
</dbReference>
<dbReference type="FunFam" id="3.10.110.10:FF:000101">
    <property type="entry name" value="Ubiquitin-conjugating enzyme E2 D2"/>
    <property type="match status" value="1"/>
</dbReference>
<dbReference type="Gene3D" id="3.10.110.10">
    <property type="entry name" value="Ubiquitin Conjugating Enzyme"/>
    <property type="match status" value="1"/>
</dbReference>
<dbReference type="InterPro" id="IPR000608">
    <property type="entry name" value="UBQ-conjugat_E2_core"/>
</dbReference>
<dbReference type="InterPro" id="IPR023313">
    <property type="entry name" value="UBQ-conjugating_AS"/>
</dbReference>
<dbReference type="InterPro" id="IPR016135">
    <property type="entry name" value="UBQ-conjugating_enzyme/RWD"/>
</dbReference>
<dbReference type="PANTHER" id="PTHR24068">
    <property type="entry name" value="UBIQUITIN-CONJUGATING ENZYME E2"/>
    <property type="match status" value="1"/>
</dbReference>
<dbReference type="Pfam" id="PF00179">
    <property type="entry name" value="UQ_con"/>
    <property type="match status" value="1"/>
</dbReference>
<dbReference type="SMART" id="SM00212">
    <property type="entry name" value="UBCc"/>
    <property type="match status" value="1"/>
</dbReference>
<dbReference type="SUPFAM" id="SSF54495">
    <property type="entry name" value="UBC-like"/>
    <property type="match status" value="1"/>
</dbReference>
<dbReference type="PROSITE" id="PS00183">
    <property type="entry name" value="UBC_1"/>
    <property type="match status" value="1"/>
</dbReference>
<dbReference type="PROSITE" id="PS50127">
    <property type="entry name" value="UBC_2"/>
    <property type="match status" value="1"/>
</dbReference>
<feature type="chain" id="PRO_0000396006" description="Ubiquitin-conjugating enzyme E2 D1">
    <location>
        <begin position="1"/>
        <end position="147"/>
    </location>
</feature>
<feature type="domain" description="UBC core" evidence="2">
    <location>
        <begin position="1"/>
        <end position="147"/>
    </location>
</feature>
<feature type="active site" description="Glycyl thioester intermediate" evidence="2 3">
    <location>
        <position position="85"/>
    </location>
</feature>
<organism>
    <name type="scientific">Rattus norvegicus</name>
    <name type="common">Rat</name>
    <dbReference type="NCBI Taxonomy" id="10116"/>
    <lineage>
        <taxon>Eukaryota</taxon>
        <taxon>Metazoa</taxon>
        <taxon>Chordata</taxon>
        <taxon>Craniata</taxon>
        <taxon>Vertebrata</taxon>
        <taxon>Euteleostomi</taxon>
        <taxon>Mammalia</taxon>
        <taxon>Eutheria</taxon>
        <taxon>Euarchontoglires</taxon>
        <taxon>Glires</taxon>
        <taxon>Rodentia</taxon>
        <taxon>Myomorpha</taxon>
        <taxon>Muroidea</taxon>
        <taxon>Muridae</taxon>
        <taxon>Murinae</taxon>
        <taxon>Rattus</taxon>
    </lineage>
</organism>
<sequence length="147" mass="16602">MALKRIQKELSDLQRDPPAHCSAGPVGDDLFHWQATIMGPPDSAYQGGVFFLTVHFPTDYPFKPPKIAFTTKIYHPNINSNGSICLDILRSQWSPALTVSKVLLSICSLLCDPNPDDPLVPDIAQIYKSDKEKYNRHAREWTQKYAM</sequence>
<accession>D3ZDK2</accession>
<reference key="1">
    <citation type="submission" date="2005-07" db="EMBL/GenBank/DDBJ databases">
        <authorList>
            <person name="Mural R.J."/>
            <person name="Adams M.D."/>
            <person name="Myers E.W."/>
            <person name="Smith H.O."/>
            <person name="Venter J.C."/>
        </authorList>
    </citation>
    <scope>NUCLEOTIDE SEQUENCE [LARGE SCALE GENOMIC DNA]</scope>
</reference>
<reference key="2">
    <citation type="journal article" date="2008" name="J. Biol. Chem.">
        <title>Members of the E2D (UbcH5) family mediate the ubiquitination of the conserved cysteine of Pex5p, the peroxisomal import receptor.</title>
        <authorList>
            <person name="Grou C.P."/>
            <person name="Carvalho A.F."/>
            <person name="Pinto M.P."/>
            <person name="Wiese S."/>
            <person name="Piechura H."/>
            <person name="Meyer H.E."/>
            <person name="Warscheid B."/>
            <person name="Sa-Miranda C."/>
            <person name="Azevedo J.E."/>
        </authorList>
    </citation>
    <scope>FUNCTION</scope>
    <scope>IDENTIFICATION BY MASS SPECTROMETRY</scope>
</reference>
<comment type="function">
    <text evidence="1 4">Accepts ubiquitin from the E1 complex and catalyzes its covalent attachment to other proteins. In vitro catalyzes 'Lys-48'-linked polyubiquitination. Mediates the selective degradation of short-lived and abnormal proteins. Functions in the E6/E6-AP-induced ubiquitination of p53/TP53. Mediates auto-ubiquitination of STUB1, TRAF6 and TRIM63/MURF1. Ubiquitinates STUB1-associated HSP90AB1 in vitro. Lacks inherent specificity for any particular lysine residue of ubiquitin. Essential for viral activation of IRF3. Mediates polyubiquitination of CYP3A4 (By similarity). Mediates ubiquitination of PEX5.</text>
</comment>
<comment type="catalytic activity">
    <reaction evidence="1 2 3">
        <text>S-ubiquitinyl-[E1 ubiquitin-activating enzyme]-L-cysteine + [E2 ubiquitin-conjugating enzyme]-L-cysteine = [E1 ubiquitin-activating enzyme]-L-cysteine + S-ubiquitinyl-[E2 ubiquitin-conjugating enzyme]-L-cysteine.</text>
        <dbReference type="EC" id="2.3.2.23"/>
    </reaction>
</comment>
<comment type="catalytic activity">
    <reaction evidence="1">
        <text>S-ubiquitinyl-[E1 ubiquitin-activating enzyme]-L-cysteine + [acceptor protein]-L-lysine = [E1 ubiquitin-activating enzyme]-L-cysteine + N(6)-monoubiquitinyl-[acceptor protein]-L-lysine.</text>
        <dbReference type="EC" id="2.3.2.24"/>
    </reaction>
</comment>
<comment type="pathway">
    <text evidence="2">Protein modification; protein ubiquitination.</text>
</comment>
<comment type="subunit">
    <text evidence="1">Component of a E3 ubiquitin ligase complex containing UBE2D1, SIAH1, CACYBP/SIP, SKP1, APC and TBL1X. Interacts with RNF11.</text>
</comment>
<comment type="subcellular location">
    <subcellularLocation>
        <location evidence="1">Cytoplasm</location>
    </subcellularLocation>
</comment>
<comment type="PTM">
    <text evidence="1">Autoubiquitinated.</text>
</comment>
<comment type="similarity">
    <text evidence="2">Belongs to the ubiquitin-conjugating enzyme family.</text>
</comment>
<protein>
    <recommendedName>
        <fullName>Ubiquitin-conjugating enzyme E2 D1</fullName>
        <ecNumber>2.3.2.23</ecNumber>
    </recommendedName>
    <alternativeName>
        <fullName>(E3-independent) E2 ubiquitin-conjugating enzyme D1</fullName>
        <ecNumber>2.3.2.24</ecNumber>
    </alternativeName>
    <alternativeName>
        <fullName>E2 ubiquitin-conjugating enzyme D1</fullName>
    </alternativeName>
    <alternativeName>
        <fullName>Ubiquitin carrier protein D1</fullName>
    </alternativeName>
    <alternativeName>
        <fullName>Ubiquitin-conjugating enzyme E2(17)KB 1</fullName>
    </alternativeName>
    <alternativeName>
        <fullName>Ubiquitin-conjugating enzyme E2-17 kDa 1</fullName>
    </alternativeName>
    <alternativeName>
        <fullName>Ubiquitin-protein ligase D1</fullName>
    </alternativeName>
</protein>
<evidence type="ECO:0000250" key="1">
    <source>
        <dbReference type="UniProtKB" id="P51668"/>
    </source>
</evidence>
<evidence type="ECO:0000255" key="2">
    <source>
        <dbReference type="PROSITE-ProRule" id="PRU00388"/>
    </source>
</evidence>
<evidence type="ECO:0000255" key="3">
    <source>
        <dbReference type="PROSITE-ProRule" id="PRU10133"/>
    </source>
</evidence>
<evidence type="ECO:0000269" key="4">
    <source>
    </source>
</evidence>
<keyword id="KW-0067">ATP-binding</keyword>
<keyword id="KW-0963">Cytoplasm</keyword>
<keyword id="KW-0547">Nucleotide-binding</keyword>
<keyword id="KW-1185">Reference proteome</keyword>
<keyword id="KW-0808">Transferase</keyword>
<keyword id="KW-0832">Ubl conjugation</keyword>
<keyword id="KW-0833">Ubl conjugation pathway</keyword>